<comment type="miscellaneous">
    <text evidence="1">Present with 6230 molecules/cell in log phase SD medium.</text>
</comment>
<comment type="similarity">
    <text evidence="2">Belongs to the phosphatidylethanolamine-binding protein family.</text>
</comment>
<sequence length="201" mass="22151">MSSAIVAKLNKEDIIKDTVKDLAFEILGELSVSYVDSDDIKLGNPMPMEATQAAPTIKFTPFDKSQLSAEDKLALLMTDPDAPSRTEHKWSEVCHYIITDIPVEYGPGGDIAISGKGVVRNNYIGPGPPKNSGYHRYVFFLCKQPKGADSSTFTKVENIISWGYGTPGAGAYDYIKENNLQLVGANYYMVENTTVDFNYDM</sequence>
<organism>
    <name type="scientific">Saccharomyces cerevisiae (strain ATCC 204508 / S288c)</name>
    <name type="common">Baker's yeast</name>
    <dbReference type="NCBI Taxonomy" id="559292"/>
    <lineage>
        <taxon>Eukaryota</taxon>
        <taxon>Fungi</taxon>
        <taxon>Dikarya</taxon>
        <taxon>Ascomycota</taxon>
        <taxon>Saccharomycotina</taxon>
        <taxon>Saccharomycetes</taxon>
        <taxon>Saccharomycetales</taxon>
        <taxon>Saccharomycetaceae</taxon>
        <taxon>Saccharomyces</taxon>
    </lineage>
</organism>
<name>YL179_YEAST</name>
<gene>
    <name type="ordered locus">YLR179C</name>
    <name type="ORF">L9470.20</name>
</gene>
<reference key="1">
    <citation type="journal article" date="1997" name="Nature">
        <title>The nucleotide sequence of Saccharomyces cerevisiae chromosome XII.</title>
        <authorList>
            <person name="Johnston M."/>
            <person name="Hillier L.W."/>
            <person name="Riles L."/>
            <person name="Albermann K."/>
            <person name="Andre B."/>
            <person name="Ansorge W."/>
            <person name="Benes V."/>
            <person name="Brueckner M."/>
            <person name="Delius H."/>
            <person name="Dubois E."/>
            <person name="Duesterhoeft A."/>
            <person name="Entian K.-D."/>
            <person name="Floeth M."/>
            <person name="Goffeau A."/>
            <person name="Hebling U."/>
            <person name="Heumann K."/>
            <person name="Heuss-Neitzel D."/>
            <person name="Hilbert H."/>
            <person name="Hilger F."/>
            <person name="Kleine K."/>
            <person name="Koetter P."/>
            <person name="Louis E.J."/>
            <person name="Messenguy F."/>
            <person name="Mewes H.-W."/>
            <person name="Miosga T."/>
            <person name="Moestl D."/>
            <person name="Mueller-Auer S."/>
            <person name="Nentwich U."/>
            <person name="Obermaier B."/>
            <person name="Piravandi E."/>
            <person name="Pohl T.M."/>
            <person name="Portetelle D."/>
            <person name="Purnelle B."/>
            <person name="Rechmann S."/>
            <person name="Rieger M."/>
            <person name="Rinke M."/>
            <person name="Rose M."/>
            <person name="Scharfe M."/>
            <person name="Scherens B."/>
            <person name="Scholler P."/>
            <person name="Schwager C."/>
            <person name="Schwarz S."/>
            <person name="Underwood A.P."/>
            <person name="Urrestarazu L.A."/>
            <person name="Vandenbol M."/>
            <person name="Verhasselt P."/>
            <person name="Vierendeels F."/>
            <person name="Voet M."/>
            <person name="Volckaert G."/>
            <person name="Voss H."/>
            <person name="Wambutt R."/>
            <person name="Wedler E."/>
            <person name="Wedler H."/>
            <person name="Zimmermann F.K."/>
            <person name="Zollner A."/>
            <person name="Hani J."/>
            <person name="Hoheisel J.D."/>
        </authorList>
    </citation>
    <scope>NUCLEOTIDE SEQUENCE [LARGE SCALE GENOMIC DNA]</scope>
    <source>
        <strain>ATCC 204508 / S288c</strain>
    </source>
</reference>
<reference key="2">
    <citation type="journal article" date="2014" name="G3 (Bethesda)">
        <title>The reference genome sequence of Saccharomyces cerevisiae: Then and now.</title>
        <authorList>
            <person name="Engel S.R."/>
            <person name="Dietrich F.S."/>
            <person name="Fisk D.G."/>
            <person name="Binkley G."/>
            <person name="Balakrishnan R."/>
            <person name="Costanzo M.C."/>
            <person name="Dwight S.S."/>
            <person name="Hitz B.C."/>
            <person name="Karra K."/>
            <person name="Nash R.S."/>
            <person name="Weng S."/>
            <person name="Wong E.D."/>
            <person name="Lloyd P."/>
            <person name="Skrzypek M.S."/>
            <person name="Miyasato S.R."/>
            <person name="Simison M."/>
            <person name="Cherry J.M."/>
        </authorList>
    </citation>
    <scope>GENOME REANNOTATION</scope>
    <source>
        <strain>ATCC 204508 / S288c</strain>
    </source>
</reference>
<reference key="3">
    <citation type="journal article" date="2003" name="Nature">
        <title>Global analysis of protein expression in yeast.</title>
        <authorList>
            <person name="Ghaemmaghami S."/>
            <person name="Huh W.-K."/>
            <person name="Bower K."/>
            <person name="Howson R.W."/>
            <person name="Belle A."/>
            <person name="Dephoure N."/>
            <person name="O'Shea E.K."/>
            <person name="Weissman J.S."/>
        </authorList>
    </citation>
    <scope>LEVEL OF PROTEIN EXPRESSION [LARGE SCALE ANALYSIS]</scope>
</reference>
<proteinExistence type="evidence at protein level"/>
<accession>Q06252</accession>
<accession>D6VYI3</accession>
<evidence type="ECO:0000269" key="1">
    <source>
    </source>
</evidence>
<evidence type="ECO:0000305" key="2"/>
<protein>
    <recommendedName>
        <fullName>Uncharacterized protein YLR179C</fullName>
    </recommendedName>
</protein>
<feature type="chain" id="PRO_0000204754" description="Uncharacterized protein YLR179C">
    <location>
        <begin position="1"/>
        <end position="201"/>
    </location>
</feature>
<keyword id="KW-1185">Reference proteome</keyword>
<dbReference type="EMBL" id="U17246">
    <property type="protein sequence ID" value="AAB67472.1"/>
    <property type="molecule type" value="Genomic_DNA"/>
</dbReference>
<dbReference type="EMBL" id="BK006945">
    <property type="protein sequence ID" value="DAA09499.1"/>
    <property type="molecule type" value="Genomic_DNA"/>
</dbReference>
<dbReference type="PIR" id="S51424">
    <property type="entry name" value="S51424"/>
</dbReference>
<dbReference type="RefSeq" id="NP_013280.1">
    <property type="nucleotide sequence ID" value="NM_001182066.1"/>
</dbReference>
<dbReference type="SMR" id="Q06252"/>
<dbReference type="BioGRID" id="31450">
    <property type="interactions" value="47"/>
</dbReference>
<dbReference type="FunCoup" id="Q06252">
    <property type="interactions" value="1699"/>
</dbReference>
<dbReference type="MINT" id="Q06252"/>
<dbReference type="STRING" id="4932.YLR179C"/>
<dbReference type="iPTMnet" id="Q06252"/>
<dbReference type="PaxDb" id="4932-YLR179C"/>
<dbReference type="PeptideAtlas" id="Q06252"/>
<dbReference type="EnsemblFungi" id="YLR179C_mRNA">
    <property type="protein sequence ID" value="YLR179C"/>
    <property type="gene ID" value="YLR179C"/>
</dbReference>
<dbReference type="GeneID" id="850876"/>
<dbReference type="KEGG" id="sce:YLR179C"/>
<dbReference type="AGR" id="SGD:S000004169"/>
<dbReference type="SGD" id="S000004169">
    <property type="gene designation" value="YLR179C"/>
</dbReference>
<dbReference type="VEuPathDB" id="FungiDB:YLR179C"/>
<dbReference type="eggNOG" id="KOG3346">
    <property type="taxonomic scope" value="Eukaryota"/>
</dbReference>
<dbReference type="GeneTree" id="ENSGT00940000167139"/>
<dbReference type="HOGENOM" id="CLU_043994_3_1_1"/>
<dbReference type="InParanoid" id="Q06252"/>
<dbReference type="OMA" id="PMEATQA"/>
<dbReference type="OrthoDB" id="2506647at2759"/>
<dbReference type="BioCyc" id="YEAST:G3O-32304-MONOMER"/>
<dbReference type="BioGRID-ORCS" id="850876">
    <property type="hits" value="3 hits in 10 CRISPR screens"/>
</dbReference>
<dbReference type="CD-CODE" id="E03F929F">
    <property type="entry name" value="Stress granule"/>
</dbReference>
<dbReference type="PRO" id="PR:Q06252"/>
<dbReference type="Proteomes" id="UP000002311">
    <property type="component" value="Chromosome XII"/>
</dbReference>
<dbReference type="RNAct" id="Q06252">
    <property type="molecule type" value="protein"/>
</dbReference>
<dbReference type="GO" id="GO:0005737">
    <property type="term" value="C:cytoplasm"/>
    <property type="evidence" value="ECO:0000314"/>
    <property type="project" value="SGD"/>
</dbReference>
<dbReference type="GO" id="GO:0005634">
    <property type="term" value="C:nucleus"/>
    <property type="evidence" value="ECO:0007005"/>
    <property type="project" value="SGD"/>
</dbReference>
<dbReference type="GO" id="GO:0030414">
    <property type="term" value="F:peptidase inhibitor activity"/>
    <property type="evidence" value="ECO:0000318"/>
    <property type="project" value="GO_Central"/>
</dbReference>
<dbReference type="GO" id="GO:0005543">
    <property type="term" value="F:phospholipid binding"/>
    <property type="evidence" value="ECO:0000318"/>
    <property type="project" value="GO_Central"/>
</dbReference>
<dbReference type="GO" id="GO:0030162">
    <property type="term" value="P:regulation of proteolysis"/>
    <property type="evidence" value="ECO:0000318"/>
    <property type="project" value="GO_Central"/>
</dbReference>
<dbReference type="GO" id="GO:0046578">
    <property type="term" value="P:regulation of Ras protein signal transduction"/>
    <property type="evidence" value="ECO:0000318"/>
    <property type="project" value="GO_Central"/>
</dbReference>
<dbReference type="CDD" id="cd00866">
    <property type="entry name" value="PEBP_euk"/>
    <property type="match status" value="1"/>
</dbReference>
<dbReference type="FunFam" id="3.90.280.10:FF:000012">
    <property type="entry name" value="YLR179C-like protein"/>
    <property type="match status" value="1"/>
</dbReference>
<dbReference type="Gene3D" id="3.90.280.10">
    <property type="entry name" value="PEBP-like"/>
    <property type="match status" value="1"/>
</dbReference>
<dbReference type="InterPro" id="IPR008914">
    <property type="entry name" value="PEBP"/>
</dbReference>
<dbReference type="InterPro" id="IPR036610">
    <property type="entry name" value="PEBP-like_sf"/>
</dbReference>
<dbReference type="InterPro" id="IPR035810">
    <property type="entry name" value="PEBP_euk"/>
</dbReference>
<dbReference type="InterPro" id="IPR001858">
    <property type="entry name" value="Phosphatidylethanolamine-bd_CS"/>
</dbReference>
<dbReference type="PANTHER" id="PTHR11362:SF148">
    <property type="entry name" value="CARBOXYPEPTIDASE Y INHIBITOR"/>
    <property type="match status" value="1"/>
</dbReference>
<dbReference type="PANTHER" id="PTHR11362">
    <property type="entry name" value="PHOSPHATIDYLETHANOLAMINE-BINDING PROTEIN"/>
    <property type="match status" value="1"/>
</dbReference>
<dbReference type="Pfam" id="PF01161">
    <property type="entry name" value="PBP"/>
    <property type="match status" value="1"/>
</dbReference>
<dbReference type="SUPFAM" id="SSF49777">
    <property type="entry name" value="PEBP-like"/>
    <property type="match status" value="1"/>
</dbReference>
<dbReference type="PROSITE" id="PS01220">
    <property type="entry name" value="PBP"/>
    <property type="match status" value="1"/>
</dbReference>